<protein>
    <recommendedName>
        <fullName evidence="1">DNA-directed RNA polymerase subunit beta'</fullName>
        <ecNumber evidence="1">2.7.7.6</ecNumber>
    </recommendedName>
    <alternativeName>
        <fullName evidence="1">PEP</fullName>
    </alternativeName>
    <alternativeName>
        <fullName evidence="1">Plastid-encoded RNA polymerase subunit beta'</fullName>
        <shortName evidence="1">RNA polymerase subunit beta'</shortName>
    </alternativeName>
</protein>
<dbReference type="EC" id="2.7.7.6" evidence="1"/>
<dbReference type="EMBL" id="AF137379">
    <property type="protein sequence ID" value="AAD54811.1"/>
    <property type="molecule type" value="Genomic_DNA"/>
</dbReference>
<dbReference type="RefSeq" id="NP_050840.1">
    <property type="nucleotide sequence ID" value="NC_000927.1"/>
</dbReference>
<dbReference type="SMR" id="Q9TL05"/>
<dbReference type="GeneID" id="801987"/>
<dbReference type="GO" id="GO:0009507">
    <property type="term" value="C:chloroplast"/>
    <property type="evidence" value="ECO:0007669"/>
    <property type="project" value="UniProtKB-SubCell"/>
</dbReference>
<dbReference type="GO" id="GO:0000428">
    <property type="term" value="C:DNA-directed RNA polymerase complex"/>
    <property type="evidence" value="ECO:0007669"/>
    <property type="project" value="UniProtKB-KW"/>
</dbReference>
<dbReference type="GO" id="GO:0005739">
    <property type="term" value="C:mitochondrion"/>
    <property type="evidence" value="ECO:0007669"/>
    <property type="project" value="GOC"/>
</dbReference>
<dbReference type="GO" id="GO:0003677">
    <property type="term" value="F:DNA binding"/>
    <property type="evidence" value="ECO:0007669"/>
    <property type="project" value="UniProtKB-UniRule"/>
</dbReference>
<dbReference type="GO" id="GO:0003899">
    <property type="term" value="F:DNA-directed RNA polymerase activity"/>
    <property type="evidence" value="ECO:0007669"/>
    <property type="project" value="UniProtKB-UniRule"/>
</dbReference>
<dbReference type="GO" id="GO:0000287">
    <property type="term" value="F:magnesium ion binding"/>
    <property type="evidence" value="ECO:0007669"/>
    <property type="project" value="UniProtKB-UniRule"/>
</dbReference>
<dbReference type="GO" id="GO:0008270">
    <property type="term" value="F:zinc ion binding"/>
    <property type="evidence" value="ECO:0007669"/>
    <property type="project" value="UniProtKB-UniRule"/>
</dbReference>
<dbReference type="GO" id="GO:0006351">
    <property type="term" value="P:DNA-templated transcription"/>
    <property type="evidence" value="ECO:0007669"/>
    <property type="project" value="UniProtKB-UniRule"/>
</dbReference>
<dbReference type="Gene3D" id="1.10.40.90">
    <property type="match status" value="1"/>
</dbReference>
<dbReference type="Gene3D" id="2.40.40.20">
    <property type="match status" value="1"/>
</dbReference>
<dbReference type="Gene3D" id="4.10.860.120">
    <property type="entry name" value="RNA polymerase II, clamp domain"/>
    <property type="match status" value="1"/>
</dbReference>
<dbReference type="Gene3D" id="1.10.274.100">
    <property type="entry name" value="RNA polymerase Rpb1, domain 3"/>
    <property type="match status" value="1"/>
</dbReference>
<dbReference type="HAMAP" id="MF_01323">
    <property type="entry name" value="RNApol_bact_RpoC1"/>
    <property type="match status" value="1"/>
</dbReference>
<dbReference type="InterPro" id="IPR045867">
    <property type="entry name" value="DNA-dir_RpoC_beta_prime"/>
</dbReference>
<dbReference type="InterPro" id="IPR000722">
    <property type="entry name" value="RNA_pol_asu"/>
</dbReference>
<dbReference type="InterPro" id="IPR006592">
    <property type="entry name" value="RNA_pol_N"/>
</dbReference>
<dbReference type="InterPro" id="IPR007080">
    <property type="entry name" value="RNA_pol_Rpb1_1"/>
</dbReference>
<dbReference type="InterPro" id="IPR007066">
    <property type="entry name" value="RNA_pol_Rpb1_3"/>
</dbReference>
<dbReference type="InterPro" id="IPR042102">
    <property type="entry name" value="RNA_pol_Rpb1_3_sf"/>
</dbReference>
<dbReference type="InterPro" id="IPR044893">
    <property type="entry name" value="RNA_pol_Rpb1_clamp_domain"/>
</dbReference>
<dbReference type="InterPro" id="IPR034678">
    <property type="entry name" value="RNApol_RpoC1"/>
</dbReference>
<dbReference type="PANTHER" id="PTHR19376">
    <property type="entry name" value="DNA-DIRECTED RNA POLYMERASE"/>
    <property type="match status" value="1"/>
</dbReference>
<dbReference type="PANTHER" id="PTHR19376:SF54">
    <property type="entry name" value="DNA-DIRECTED RNA POLYMERASE SUBUNIT BETA"/>
    <property type="match status" value="1"/>
</dbReference>
<dbReference type="Pfam" id="PF04997">
    <property type="entry name" value="RNA_pol_Rpb1_1"/>
    <property type="match status" value="1"/>
</dbReference>
<dbReference type="Pfam" id="PF00623">
    <property type="entry name" value="RNA_pol_Rpb1_2"/>
    <property type="match status" value="1"/>
</dbReference>
<dbReference type="Pfam" id="PF04983">
    <property type="entry name" value="RNA_pol_Rpb1_3"/>
    <property type="match status" value="1"/>
</dbReference>
<dbReference type="SMART" id="SM00663">
    <property type="entry name" value="RPOLA_N"/>
    <property type="match status" value="1"/>
</dbReference>
<dbReference type="SUPFAM" id="SSF64484">
    <property type="entry name" value="beta and beta-prime subunits of DNA dependent RNA-polymerase"/>
    <property type="match status" value="1"/>
</dbReference>
<gene>
    <name evidence="1" type="primary">rpoC1</name>
</gene>
<comment type="function">
    <text evidence="1">DNA-dependent RNA polymerase catalyzes the transcription of DNA into RNA using the four ribonucleoside triphosphates as substrates.</text>
</comment>
<comment type="catalytic activity">
    <reaction evidence="1">
        <text>RNA(n) + a ribonucleoside 5'-triphosphate = RNA(n+1) + diphosphate</text>
        <dbReference type="Rhea" id="RHEA:21248"/>
        <dbReference type="Rhea" id="RHEA-COMP:14527"/>
        <dbReference type="Rhea" id="RHEA-COMP:17342"/>
        <dbReference type="ChEBI" id="CHEBI:33019"/>
        <dbReference type="ChEBI" id="CHEBI:61557"/>
        <dbReference type="ChEBI" id="CHEBI:140395"/>
        <dbReference type="EC" id="2.7.7.6"/>
    </reaction>
</comment>
<comment type="cofactor">
    <cofactor evidence="1">
        <name>Mg(2+)</name>
        <dbReference type="ChEBI" id="CHEBI:18420"/>
    </cofactor>
    <text evidence="1">Binds 1 Mg(2+) ion per subunit.</text>
</comment>
<comment type="cofactor">
    <cofactor evidence="1">
        <name>Zn(2+)</name>
        <dbReference type="ChEBI" id="CHEBI:29105"/>
    </cofactor>
    <text evidence="1">Binds 1 Zn(2+) ion per subunit.</text>
</comment>
<comment type="subunit">
    <text evidence="1">In plastids the minimal PEP RNA polymerase catalytic core is composed of four subunits: alpha, beta, beta', and beta''. When a (nuclear-encoded) sigma factor is associated with the core the holoenzyme is formed, which can initiate transcription.</text>
</comment>
<comment type="subcellular location">
    <subcellularLocation>
        <location evidence="1">Plastid</location>
        <location evidence="1">Chloroplast</location>
    </subcellularLocation>
</comment>
<comment type="similarity">
    <text evidence="1">Belongs to the RNA polymerase beta' chain family. RpoC1 subfamily.</text>
</comment>
<geneLocation type="chloroplast"/>
<proteinExistence type="inferred from homology"/>
<evidence type="ECO:0000255" key="1">
    <source>
        <dbReference type="HAMAP-Rule" id="MF_01323"/>
    </source>
</evidence>
<evidence type="ECO:0000256" key="2">
    <source>
        <dbReference type="SAM" id="MobiDB-lite"/>
    </source>
</evidence>
<name>RPOC1_NEPOL</name>
<reference key="1">
    <citation type="journal article" date="1999" name="Proc. Natl. Acad. Sci. U.S.A.">
        <title>The complete chloroplast DNA sequence of the green alga Nephroselmis olivacea: insights into the architecture of ancestral chloroplast genomes.</title>
        <authorList>
            <person name="Turmel M."/>
            <person name="Otis C."/>
            <person name="Lemieux C."/>
        </authorList>
    </citation>
    <scope>NUCLEOTIDE SEQUENCE [LARGE SCALE GENOMIC DNA]</scope>
    <source>
        <strain>NIES-484 / S-N-5-8</strain>
    </source>
</reference>
<sequence length="863" mass="98165">MSGEVAQDQPPIRSPRSTRRSQEIVNSAITVQSSAKLDTDKSGAQADKVSSKKSRTTSPELLEDQVVSNESKTSKKKETKASQLFSKRKEIFSTRDLRFLKLRIASPTRIRSWGTHKLPNGKQVGRITKAETINYRTYKPEMDGLFCERAFGPVKDWECHCGRTKGQERNKDGIPIPRVCTHCGVELRDSKIRRHRMGYIELVYPVVHIWYLKSIPSYLGVLLDKPRRELEAITYCTNYASSQDSMAFSASLLFPTTGSFRQSKDSMKWEYLNWFHIETYLGLKEATNSALVHYGKRIQDSPIEVGLPLSEDPRQFSIGAQAIACQLRALNLRSVSRLLSRDLYIIDARETRFGALEEEEMKRRSKLIRRLQLIHYFMQTKAQPEWMVIKALPVLPPDLRPIVQLEGGRFATTDLNDLYRRVLNRNNRFMKLHKMVAPETLIRSEKRLLQEAVDGLFDNGKRGKPVLNSSNRPLKSLADALKGKQGRFRQNLLGKRVDYSGRSVIVVGPKLRLHQCGLPKEMALELFQPLVIRLLLKRKVAPNIRYAKKLMHHAVARGPENPTIIDAVVWDTLAAVVEGYPILLNRAPTLHRLGIQAFEPVLINGRAIQLHPLVCTGFNADFDGDQMGVHIPLSAEARAEAKLLMLASHNLLSPATGQPIVVPSQDMVLGWYYLTTENPWIESTEGLYFSGLSDVEHAYHQGQIHLHSIIWVRWGGESEGSLGDEFEDNPLEIRIDANGHSWHIYSQYQLRYDDEGDLISQFIRTTTGRVVFNQLVHRHIEWSLHDQVMEEIETEFPESVLPPDVMRCLVRLYSAHAIGERPAMLGLASPGTPSPGRACAYPPRDDYADPNQIKEYLNRIGHW</sequence>
<keyword id="KW-0150">Chloroplast</keyword>
<keyword id="KW-0240">DNA-directed RNA polymerase</keyword>
<keyword id="KW-0460">Magnesium</keyword>
<keyword id="KW-0479">Metal-binding</keyword>
<keyword id="KW-0548">Nucleotidyltransferase</keyword>
<keyword id="KW-0934">Plastid</keyword>
<keyword id="KW-0804">Transcription</keyword>
<keyword id="KW-0808">Transferase</keyword>
<keyword id="KW-0862">Zinc</keyword>
<organism>
    <name type="scientific">Nephroselmis olivacea</name>
    <name type="common">Green alga</name>
    <dbReference type="NCBI Taxonomy" id="31312"/>
    <lineage>
        <taxon>Eukaryota</taxon>
        <taxon>Viridiplantae</taxon>
        <taxon>Chlorophyta</taxon>
        <taxon>Nephroselmidophyceae</taxon>
        <taxon>Nephroselmidales</taxon>
        <taxon>Nephroselmidaceae</taxon>
        <taxon>Nephroselmis</taxon>
    </lineage>
</organism>
<feature type="chain" id="PRO_0000067882" description="DNA-directed RNA polymerase subunit beta'">
    <location>
        <begin position="1"/>
        <end position="863"/>
    </location>
</feature>
<feature type="region of interest" description="Disordered" evidence="2">
    <location>
        <begin position="1"/>
        <end position="83"/>
    </location>
</feature>
<feature type="compositionally biased region" description="Polar residues" evidence="2">
    <location>
        <begin position="23"/>
        <end position="36"/>
    </location>
</feature>
<feature type="binding site" evidence="1">
    <location>
        <position position="159"/>
    </location>
    <ligand>
        <name>Zn(2+)</name>
        <dbReference type="ChEBI" id="CHEBI:29105"/>
    </ligand>
</feature>
<feature type="binding site" evidence="1">
    <location>
        <position position="161"/>
    </location>
    <ligand>
        <name>Zn(2+)</name>
        <dbReference type="ChEBI" id="CHEBI:29105"/>
    </ligand>
</feature>
<feature type="binding site" evidence="1">
    <location>
        <position position="180"/>
    </location>
    <ligand>
        <name>Zn(2+)</name>
        <dbReference type="ChEBI" id="CHEBI:29105"/>
    </ligand>
</feature>
<feature type="binding site" evidence="1">
    <location>
        <position position="183"/>
    </location>
    <ligand>
        <name>Zn(2+)</name>
        <dbReference type="ChEBI" id="CHEBI:29105"/>
    </ligand>
</feature>
<feature type="binding site" evidence="1">
    <location>
        <position position="621"/>
    </location>
    <ligand>
        <name>Mg(2+)</name>
        <dbReference type="ChEBI" id="CHEBI:18420"/>
    </ligand>
</feature>
<feature type="binding site" evidence="1">
    <location>
        <position position="623"/>
    </location>
    <ligand>
        <name>Mg(2+)</name>
        <dbReference type="ChEBI" id="CHEBI:18420"/>
    </ligand>
</feature>
<feature type="binding site" evidence="1">
    <location>
        <position position="625"/>
    </location>
    <ligand>
        <name>Mg(2+)</name>
        <dbReference type="ChEBI" id="CHEBI:18420"/>
    </ligand>
</feature>
<accession>Q9TL05</accession>